<dbReference type="EC" id="3.4.23.36" evidence="1"/>
<dbReference type="EMBL" id="AE016826">
    <property type="protein sequence ID" value="AAO26872.1"/>
    <property type="molecule type" value="Genomic_DNA"/>
</dbReference>
<dbReference type="RefSeq" id="WP_011091273.1">
    <property type="nucleotide sequence ID" value="NC_004545.1"/>
</dbReference>
<dbReference type="SMR" id="Q89AV0"/>
<dbReference type="STRING" id="224915.bbp_138"/>
<dbReference type="KEGG" id="bab:bbp_138"/>
<dbReference type="eggNOG" id="COG0597">
    <property type="taxonomic scope" value="Bacteria"/>
</dbReference>
<dbReference type="HOGENOM" id="CLU_083252_4_3_6"/>
<dbReference type="OrthoDB" id="9810259at2"/>
<dbReference type="UniPathway" id="UPA00665"/>
<dbReference type="Proteomes" id="UP000000601">
    <property type="component" value="Chromosome"/>
</dbReference>
<dbReference type="GO" id="GO:0005886">
    <property type="term" value="C:plasma membrane"/>
    <property type="evidence" value="ECO:0007669"/>
    <property type="project" value="UniProtKB-SubCell"/>
</dbReference>
<dbReference type="GO" id="GO:0004190">
    <property type="term" value="F:aspartic-type endopeptidase activity"/>
    <property type="evidence" value="ECO:0007669"/>
    <property type="project" value="UniProtKB-UniRule"/>
</dbReference>
<dbReference type="GO" id="GO:0006508">
    <property type="term" value="P:proteolysis"/>
    <property type="evidence" value="ECO:0007669"/>
    <property type="project" value="UniProtKB-KW"/>
</dbReference>
<dbReference type="HAMAP" id="MF_00161">
    <property type="entry name" value="LspA"/>
    <property type="match status" value="1"/>
</dbReference>
<dbReference type="InterPro" id="IPR001872">
    <property type="entry name" value="Peptidase_A8"/>
</dbReference>
<dbReference type="NCBIfam" id="TIGR00077">
    <property type="entry name" value="lspA"/>
    <property type="match status" value="1"/>
</dbReference>
<dbReference type="PANTHER" id="PTHR33695">
    <property type="entry name" value="LIPOPROTEIN SIGNAL PEPTIDASE"/>
    <property type="match status" value="1"/>
</dbReference>
<dbReference type="PANTHER" id="PTHR33695:SF1">
    <property type="entry name" value="LIPOPROTEIN SIGNAL PEPTIDASE"/>
    <property type="match status" value="1"/>
</dbReference>
<dbReference type="Pfam" id="PF01252">
    <property type="entry name" value="Peptidase_A8"/>
    <property type="match status" value="1"/>
</dbReference>
<dbReference type="PRINTS" id="PR00781">
    <property type="entry name" value="LIPOSIGPTASE"/>
</dbReference>
<dbReference type="PROSITE" id="PS00855">
    <property type="entry name" value="SPASE_II"/>
    <property type="match status" value="1"/>
</dbReference>
<evidence type="ECO:0000255" key="1">
    <source>
        <dbReference type="HAMAP-Rule" id="MF_00161"/>
    </source>
</evidence>
<proteinExistence type="inferred from homology"/>
<keyword id="KW-0064">Aspartyl protease</keyword>
<keyword id="KW-1003">Cell membrane</keyword>
<keyword id="KW-0378">Hydrolase</keyword>
<keyword id="KW-0472">Membrane</keyword>
<keyword id="KW-0645">Protease</keyword>
<keyword id="KW-1185">Reference proteome</keyword>
<keyword id="KW-0812">Transmembrane</keyword>
<keyword id="KW-1133">Transmembrane helix</keyword>
<accession>Q89AV0</accession>
<name>LSPA_BUCBP</name>
<comment type="function">
    <text evidence="1">This protein specifically catalyzes the removal of signal peptides from prolipoproteins.</text>
</comment>
<comment type="catalytic activity">
    <reaction evidence="1">
        <text>Release of signal peptides from bacterial membrane prolipoproteins. Hydrolyzes -Xaa-Yaa-Zaa-|-(S,diacylglyceryl)Cys-, in which Xaa is hydrophobic (preferably Leu), and Yaa (Ala or Ser) and Zaa (Gly or Ala) have small, neutral side chains.</text>
        <dbReference type="EC" id="3.4.23.36"/>
    </reaction>
</comment>
<comment type="pathway">
    <text evidence="1">Protein modification; lipoprotein biosynthesis (signal peptide cleavage).</text>
</comment>
<comment type="subcellular location">
    <subcellularLocation>
        <location evidence="1">Cell membrane</location>
        <topology evidence="1">Multi-pass membrane protein</topology>
    </subcellularLocation>
</comment>
<comment type="similarity">
    <text evidence="1">Belongs to the peptidase A8 family.</text>
</comment>
<feature type="chain" id="PRO_0000178773" description="Lipoprotein signal peptidase">
    <location>
        <begin position="1"/>
        <end position="163"/>
    </location>
</feature>
<feature type="transmembrane region" description="Helical" evidence="1">
    <location>
        <begin position="3"/>
        <end position="23"/>
    </location>
</feature>
<feature type="transmembrane region" description="Helical" evidence="1">
    <location>
        <begin position="70"/>
        <end position="90"/>
    </location>
</feature>
<feature type="transmembrane region" description="Helical" evidence="1">
    <location>
        <begin position="94"/>
        <end position="114"/>
    </location>
</feature>
<feature type="transmembrane region" description="Helical" evidence="1">
    <location>
        <begin position="134"/>
        <end position="154"/>
    </location>
</feature>
<feature type="active site" evidence="1">
    <location>
        <position position="125"/>
    </location>
</feature>
<feature type="active site" evidence="1">
    <location>
        <position position="143"/>
    </location>
</feature>
<reference key="1">
    <citation type="journal article" date="2003" name="Proc. Natl. Acad. Sci. U.S.A.">
        <title>Reductive genome evolution in Buchnera aphidicola.</title>
        <authorList>
            <person name="van Ham R.C.H.J."/>
            <person name="Kamerbeek J."/>
            <person name="Palacios C."/>
            <person name="Rausell C."/>
            <person name="Abascal F."/>
            <person name="Bastolla U."/>
            <person name="Fernandez J.M."/>
            <person name="Jimenez L."/>
            <person name="Postigo M."/>
            <person name="Silva F.J."/>
            <person name="Tamames J."/>
            <person name="Viguera E."/>
            <person name="Latorre A."/>
            <person name="Valencia A."/>
            <person name="Moran F."/>
            <person name="Moya A."/>
        </authorList>
    </citation>
    <scope>NUCLEOTIDE SEQUENCE [LARGE SCALE GENOMIC DNA]</scope>
    <source>
        <strain>Bp</strain>
    </source>
</reference>
<protein>
    <recommendedName>
        <fullName evidence="1">Lipoprotein signal peptidase</fullName>
        <ecNumber evidence="1">3.4.23.36</ecNumber>
    </recommendedName>
    <alternativeName>
        <fullName evidence="1">Prolipoprotein signal peptidase</fullName>
    </alternativeName>
    <alternativeName>
        <fullName evidence="1">Signal peptidase II</fullName>
        <shortName evidence="1">SPase II</shortName>
    </alternativeName>
</protein>
<gene>
    <name evidence="1" type="primary">lspA</name>
    <name type="ordered locus">bbp_138</name>
</gene>
<sequence length="163" mass="19147">MKIPLIYNRILILFFFIANIIILDQVSKKWIINNLLLHEKKPLISIMNIFYVRNYGTAFNFFSNNPGEKNYILCLISSIAILIILKTMYNNTTIENFFYNIPSAFIISGAIGNFIDRCYLGYVIDFIDFHINNWHFATFNIADVSIFIGSVLFIYHNKYFLKN</sequence>
<organism>
    <name type="scientific">Buchnera aphidicola subsp. Baizongia pistaciae (strain Bp)</name>
    <dbReference type="NCBI Taxonomy" id="224915"/>
    <lineage>
        <taxon>Bacteria</taxon>
        <taxon>Pseudomonadati</taxon>
        <taxon>Pseudomonadota</taxon>
        <taxon>Gammaproteobacteria</taxon>
        <taxon>Enterobacterales</taxon>
        <taxon>Erwiniaceae</taxon>
        <taxon>Buchnera</taxon>
    </lineage>
</organism>